<organism>
    <name type="scientific">Lactococcus lactis subsp. lactis (strain IL1403)</name>
    <name type="common">Streptococcus lactis</name>
    <dbReference type="NCBI Taxonomy" id="272623"/>
    <lineage>
        <taxon>Bacteria</taxon>
        <taxon>Bacillati</taxon>
        <taxon>Bacillota</taxon>
        <taxon>Bacilli</taxon>
        <taxon>Lactobacillales</taxon>
        <taxon>Streptococcaceae</taxon>
        <taxon>Lactococcus</taxon>
    </lineage>
</organism>
<sequence length="198" mass="21825">MILIIDNYDSFTYNLVQYVGVLTDVAVVKNDDDSLGNMAEKADALIFSPGPGWPADAGKMETLIQQFAGQKPILGICLGFQAIVEVFGGKLRLAHQVMHGKNSQVRQTSGNLIFNHLPSKFLVMRYHSIVMDEAVALPDFAITAVATDDGEIMAIENEKEQIYGLQFHPESIGTLDGMTMIENFVNQVNENKESSNEK</sequence>
<dbReference type="EC" id="4.1.3.27"/>
<dbReference type="EMBL" id="M87483">
    <property type="protein sequence ID" value="AAA25224.1"/>
    <property type="molecule type" value="Genomic_DNA"/>
</dbReference>
<dbReference type="EMBL" id="AE005176">
    <property type="protein sequence ID" value="AAK05567.1"/>
    <property type="molecule type" value="Genomic_DNA"/>
</dbReference>
<dbReference type="PIR" id="S35125">
    <property type="entry name" value="S35125"/>
</dbReference>
<dbReference type="RefSeq" id="NP_267625.1">
    <property type="nucleotide sequence ID" value="NC_002662.1"/>
</dbReference>
<dbReference type="RefSeq" id="WP_010905990.1">
    <property type="nucleotide sequence ID" value="NC_002662.1"/>
</dbReference>
<dbReference type="SMR" id="Q02003"/>
<dbReference type="MEROPS" id="C26.A25"/>
<dbReference type="PaxDb" id="272623-L0053"/>
<dbReference type="EnsemblBacteria" id="AAK05567">
    <property type="protein sequence ID" value="AAK05567"/>
    <property type="gene ID" value="L0053"/>
</dbReference>
<dbReference type="KEGG" id="lla:L0053"/>
<dbReference type="PATRIC" id="fig|272623.7.peg.1579"/>
<dbReference type="eggNOG" id="COG0512">
    <property type="taxonomic scope" value="Bacteria"/>
</dbReference>
<dbReference type="HOGENOM" id="CLU_014340_1_2_9"/>
<dbReference type="OrthoDB" id="9804328at2"/>
<dbReference type="UniPathway" id="UPA00035">
    <property type="reaction ID" value="UER00040"/>
</dbReference>
<dbReference type="Proteomes" id="UP000002196">
    <property type="component" value="Chromosome"/>
</dbReference>
<dbReference type="GO" id="GO:0005829">
    <property type="term" value="C:cytosol"/>
    <property type="evidence" value="ECO:0007669"/>
    <property type="project" value="TreeGrafter"/>
</dbReference>
<dbReference type="GO" id="GO:0004049">
    <property type="term" value="F:anthranilate synthase activity"/>
    <property type="evidence" value="ECO:0007669"/>
    <property type="project" value="UniProtKB-EC"/>
</dbReference>
<dbReference type="GO" id="GO:0000162">
    <property type="term" value="P:L-tryptophan biosynthetic process"/>
    <property type="evidence" value="ECO:0007669"/>
    <property type="project" value="UniProtKB-UniPathway"/>
</dbReference>
<dbReference type="CDD" id="cd01743">
    <property type="entry name" value="GATase1_Anthranilate_Synthase"/>
    <property type="match status" value="1"/>
</dbReference>
<dbReference type="FunFam" id="3.40.50.880:FF:000003">
    <property type="entry name" value="Anthranilate synthase component II"/>
    <property type="match status" value="1"/>
</dbReference>
<dbReference type="Gene3D" id="3.40.50.880">
    <property type="match status" value="1"/>
</dbReference>
<dbReference type="InterPro" id="IPR050472">
    <property type="entry name" value="Anth_synth/Amidotransfase"/>
</dbReference>
<dbReference type="InterPro" id="IPR029062">
    <property type="entry name" value="Class_I_gatase-like"/>
</dbReference>
<dbReference type="InterPro" id="IPR017926">
    <property type="entry name" value="GATASE"/>
</dbReference>
<dbReference type="InterPro" id="IPR006221">
    <property type="entry name" value="TrpG/PapA_dom"/>
</dbReference>
<dbReference type="NCBIfam" id="TIGR00566">
    <property type="entry name" value="trpG_papA"/>
    <property type="match status" value="1"/>
</dbReference>
<dbReference type="PANTHER" id="PTHR43418">
    <property type="entry name" value="MULTIFUNCTIONAL TRYPTOPHAN BIOSYNTHESIS PROTEIN-RELATED"/>
    <property type="match status" value="1"/>
</dbReference>
<dbReference type="PANTHER" id="PTHR43418:SF8">
    <property type="entry name" value="SYNTHASE COMPONENT II, PUTATIVE-RELATED"/>
    <property type="match status" value="1"/>
</dbReference>
<dbReference type="Pfam" id="PF00117">
    <property type="entry name" value="GATase"/>
    <property type="match status" value="1"/>
</dbReference>
<dbReference type="PRINTS" id="PR00097">
    <property type="entry name" value="ANTSNTHASEII"/>
</dbReference>
<dbReference type="PRINTS" id="PR00099">
    <property type="entry name" value="CPSGATASE"/>
</dbReference>
<dbReference type="PRINTS" id="PR00096">
    <property type="entry name" value="GATASE"/>
</dbReference>
<dbReference type="SUPFAM" id="SSF52317">
    <property type="entry name" value="Class I glutamine amidotransferase-like"/>
    <property type="match status" value="1"/>
</dbReference>
<dbReference type="PROSITE" id="PS51273">
    <property type="entry name" value="GATASE_TYPE_1"/>
    <property type="match status" value="1"/>
</dbReference>
<feature type="chain" id="PRO_0000056886" description="Anthranilate synthase component 2">
    <location>
        <begin position="1"/>
        <end position="198"/>
    </location>
</feature>
<feature type="domain" description="Glutamine amidotransferase type-1" evidence="3">
    <location>
        <begin position="1"/>
        <end position="194"/>
    </location>
</feature>
<feature type="active site" description="Nucleophile; for GATase activity" evidence="3">
    <location>
        <position position="77"/>
    </location>
</feature>
<feature type="active site" description="For GATase activity" evidence="3">
    <location>
        <position position="168"/>
    </location>
</feature>
<feature type="active site" description="For GATase activity" evidence="3">
    <location>
        <position position="170"/>
    </location>
</feature>
<feature type="binding site" evidence="2">
    <location>
        <begin position="50"/>
        <end position="52"/>
    </location>
    <ligand>
        <name>L-glutamine</name>
        <dbReference type="ChEBI" id="CHEBI:58359"/>
    </ligand>
</feature>
<feature type="binding site" evidence="2">
    <location>
        <position position="81"/>
    </location>
    <ligand>
        <name>L-glutamine</name>
        <dbReference type="ChEBI" id="CHEBI:58359"/>
    </ligand>
</feature>
<feature type="binding site" evidence="2">
    <location>
        <begin position="128"/>
        <end position="129"/>
    </location>
    <ligand>
        <name>L-glutamine</name>
        <dbReference type="ChEBI" id="CHEBI:58359"/>
    </ligand>
</feature>
<gene>
    <name type="primary">trpG</name>
    <name type="ordered locus">LL1469</name>
    <name type="ORF">L0053</name>
</gene>
<keyword id="KW-0028">Amino-acid biosynthesis</keyword>
<keyword id="KW-0057">Aromatic amino acid biosynthesis</keyword>
<keyword id="KW-0315">Glutamine amidotransferase</keyword>
<keyword id="KW-0456">Lyase</keyword>
<keyword id="KW-1185">Reference proteome</keyword>
<keyword id="KW-0822">Tryptophan biosynthesis</keyword>
<name>TRPG_LACLA</name>
<evidence type="ECO:0000250" key="1"/>
<evidence type="ECO:0000250" key="2">
    <source>
        <dbReference type="UniProtKB" id="P00900"/>
    </source>
</evidence>
<evidence type="ECO:0000255" key="3">
    <source>
        <dbReference type="PROSITE-ProRule" id="PRU00605"/>
    </source>
</evidence>
<reference key="1">
    <citation type="journal article" date="1992" name="J. Bacteriol.">
        <title>Tryptophan biosynthesis genes in Lactococcus lactis subsp. lactis.</title>
        <authorList>
            <person name="Bardowski J."/>
            <person name="Ehrlich S.D."/>
            <person name="Chopin A."/>
        </authorList>
    </citation>
    <scope>NUCLEOTIDE SEQUENCE [GENOMIC DNA]</scope>
    <source>
        <strain>IL1403</strain>
    </source>
</reference>
<reference key="2">
    <citation type="journal article" date="2001" name="Genome Res.">
        <title>The complete genome sequence of the lactic acid bacterium Lactococcus lactis ssp. lactis IL1403.</title>
        <authorList>
            <person name="Bolotin A."/>
            <person name="Wincker P."/>
            <person name="Mauger S."/>
            <person name="Jaillon O."/>
            <person name="Malarme K."/>
            <person name="Weissenbach J."/>
            <person name="Ehrlich S.D."/>
            <person name="Sorokin A."/>
        </authorList>
    </citation>
    <scope>NUCLEOTIDE SEQUENCE [LARGE SCALE GENOMIC DNA]</scope>
    <source>
        <strain>IL1403</strain>
    </source>
</reference>
<comment type="function">
    <text evidence="1">Part of a heterotetrameric complex that catalyzes the two-step biosynthesis of anthranilate, an intermediate in the biosynthesis of L-tryptophan. In the first step, the glutamine-binding beta subunit (TrpG) of anthranilate synthase (AS) provides the glutamine amidotransferase activity which generates ammonia as a substrate that, along with chorismate, is used in the second step, catalyzed by the large alpha subunit of AS (TrpE) to produce anthranilate. In the absence of TrpG, TrpE can synthesize anthranilate directly from chorismate and high concentrations of ammonia (By similarity).</text>
</comment>
<comment type="catalytic activity">
    <reaction>
        <text>chorismate + L-glutamine = anthranilate + pyruvate + L-glutamate + H(+)</text>
        <dbReference type="Rhea" id="RHEA:21732"/>
        <dbReference type="ChEBI" id="CHEBI:15361"/>
        <dbReference type="ChEBI" id="CHEBI:15378"/>
        <dbReference type="ChEBI" id="CHEBI:16567"/>
        <dbReference type="ChEBI" id="CHEBI:29748"/>
        <dbReference type="ChEBI" id="CHEBI:29985"/>
        <dbReference type="ChEBI" id="CHEBI:58359"/>
        <dbReference type="EC" id="4.1.3.27"/>
    </reaction>
</comment>
<comment type="pathway">
    <text>Amino-acid biosynthesis; L-tryptophan biosynthesis; L-tryptophan from chorismate: step 1/5.</text>
</comment>
<comment type="subunit">
    <text evidence="1">Heterotetramer consisting of two non-identical subunits: a beta subunit (TrpG) and a large alpha subunit (TrpE).</text>
</comment>
<protein>
    <recommendedName>
        <fullName>Anthranilate synthase component 2</fullName>
        <shortName>AS</shortName>
        <shortName>ASII</shortName>
        <ecNumber>4.1.3.27</ecNumber>
    </recommendedName>
    <alternativeName>
        <fullName>Anthranilate synthase, GATase component</fullName>
    </alternativeName>
    <alternativeName>
        <fullName>Anthranilate synthase, glutamine amidotransferase component</fullName>
    </alternativeName>
</protein>
<accession>Q02003</accession>
<proteinExistence type="inferred from homology"/>